<name>RL23_CALBD</name>
<protein>
    <recommendedName>
        <fullName evidence="1">Large ribosomal subunit protein uL23</fullName>
    </recommendedName>
    <alternativeName>
        <fullName evidence="2">50S ribosomal protein L23</fullName>
    </alternativeName>
</protein>
<accession>B9MKH9</accession>
<dbReference type="EMBL" id="CP001393">
    <property type="protein sequence ID" value="ACM60837.1"/>
    <property type="molecule type" value="Genomic_DNA"/>
</dbReference>
<dbReference type="RefSeq" id="WP_013402924.1">
    <property type="nucleotide sequence ID" value="NC_012034.1"/>
</dbReference>
<dbReference type="SMR" id="B9MKH9"/>
<dbReference type="STRING" id="521460.Athe_1743"/>
<dbReference type="GeneID" id="31773100"/>
<dbReference type="KEGG" id="ate:Athe_1743"/>
<dbReference type="eggNOG" id="COG0089">
    <property type="taxonomic scope" value="Bacteria"/>
</dbReference>
<dbReference type="HOGENOM" id="CLU_037562_3_2_9"/>
<dbReference type="Proteomes" id="UP000007723">
    <property type="component" value="Chromosome"/>
</dbReference>
<dbReference type="GO" id="GO:1990904">
    <property type="term" value="C:ribonucleoprotein complex"/>
    <property type="evidence" value="ECO:0007669"/>
    <property type="project" value="UniProtKB-KW"/>
</dbReference>
<dbReference type="GO" id="GO:0005840">
    <property type="term" value="C:ribosome"/>
    <property type="evidence" value="ECO:0007669"/>
    <property type="project" value="UniProtKB-KW"/>
</dbReference>
<dbReference type="GO" id="GO:0019843">
    <property type="term" value="F:rRNA binding"/>
    <property type="evidence" value="ECO:0007669"/>
    <property type="project" value="UniProtKB-UniRule"/>
</dbReference>
<dbReference type="GO" id="GO:0003735">
    <property type="term" value="F:structural constituent of ribosome"/>
    <property type="evidence" value="ECO:0007669"/>
    <property type="project" value="InterPro"/>
</dbReference>
<dbReference type="GO" id="GO:0006412">
    <property type="term" value="P:translation"/>
    <property type="evidence" value="ECO:0007669"/>
    <property type="project" value="UniProtKB-UniRule"/>
</dbReference>
<dbReference type="FunFam" id="3.30.70.330:FF:000001">
    <property type="entry name" value="50S ribosomal protein L23"/>
    <property type="match status" value="1"/>
</dbReference>
<dbReference type="Gene3D" id="3.30.70.330">
    <property type="match status" value="1"/>
</dbReference>
<dbReference type="HAMAP" id="MF_01369_B">
    <property type="entry name" value="Ribosomal_uL23_B"/>
    <property type="match status" value="1"/>
</dbReference>
<dbReference type="InterPro" id="IPR012677">
    <property type="entry name" value="Nucleotide-bd_a/b_plait_sf"/>
</dbReference>
<dbReference type="InterPro" id="IPR013025">
    <property type="entry name" value="Ribosomal_uL23-like"/>
</dbReference>
<dbReference type="InterPro" id="IPR012678">
    <property type="entry name" value="Ribosomal_uL23/eL15/eS24_sf"/>
</dbReference>
<dbReference type="InterPro" id="IPR001014">
    <property type="entry name" value="Ribosomal_uL23_CS"/>
</dbReference>
<dbReference type="NCBIfam" id="NF004363">
    <property type="entry name" value="PRK05738.2-4"/>
    <property type="match status" value="1"/>
</dbReference>
<dbReference type="PANTHER" id="PTHR11620">
    <property type="entry name" value="60S RIBOSOMAL PROTEIN L23A"/>
    <property type="match status" value="1"/>
</dbReference>
<dbReference type="Pfam" id="PF00276">
    <property type="entry name" value="Ribosomal_L23"/>
    <property type="match status" value="1"/>
</dbReference>
<dbReference type="SUPFAM" id="SSF54189">
    <property type="entry name" value="Ribosomal proteins S24e, L23 and L15e"/>
    <property type="match status" value="1"/>
</dbReference>
<dbReference type="PROSITE" id="PS00050">
    <property type="entry name" value="RIBOSOMAL_L23"/>
    <property type="match status" value="1"/>
</dbReference>
<feature type="chain" id="PRO_1000184060" description="Large ribosomal subunit protein uL23">
    <location>
        <begin position="1"/>
        <end position="96"/>
    </location>
</feature>
<proteinExistence type="inferred from homology"/>
<organism>
    <name type="scientific">Caldicellulosiruptor bescii (strain ATCC BAA-1888 / DSM 6725 / KCTC 15123 / Z-1320)</name>
    <name type="common">Anaerocellum thermophilum</name>
    <dbReference type="NCBI Taxonomy" id="521460"/>
    <lineage>
        <taxon>Bacteria</taxon>
        <taxon>Bacillati</taxon>
        <taxon>Bacillota</taxon>
        <taxon>Bacillota incertae sedis</taxon>
        <taxon>Caldicellulosiruptorales</taxon>
        <taxon>Caldicellulosiruptoraceae</taxon>
        <taxon>Caldicellulosiruptor</taxon>
    </lineage>
</organism>
<keyword id="KW-0687">Ribonucleoprotein</keyword>
<keyword id="KW-0689">Ribosomal protein</keyword>
<keyword id="KW-0694">RNA-binding</keyword>
<keyword id="KW-0699">rRNA-binding</keyword>
<evidence type="ECO:0000255" key="1">
    <source>
        <dbReference type="HAMAP-Rule" id="MF_01369"/>
    </source>
</evidence>
<evidence type="ECO:0000305" key="2"/>
<gene>
    <name evidence="1" type="primary">rplW</name>
    <name type="ordered locus">Athe_1743</name>
</gene>
<sequence length="96" mass="11412">MLPEEIIKRPIITEKSMSMIPQKKYTFEVDRRANKIEIKKAVEQLFGVEVEKVWTMNVKPKRKRVGRFEGRTKAWKKAIVKLTDRSKTIEFFDSLI</sequence>
<reference key="1">
    <citation type="submission" date="2009-01" db="EMBL/GenBank/DDBJ databases">
        <title>Complete sequence of chromosome of Caldicellulosiruptor becscii DSM 6725.</title>
        <authorList>
            <person name="Lucas S."/>
            <person name="Copeland A."/>
            <person name="Lapidus A."/>
            <person name="Glavina del Rio T."/>
            <person name="Tice H."/>
            <person name="Bruce D."/>
            <person name="Goodwin L."/>
            <person name="Pitluck S."/>
            <person name="Sims D."/>
            <person name="Meincke L."/>
            <person name="Brettin T."/>
            <person name="Detter J.C."/>
            <person name="Han C."/>
            <person name="Larimer F."/>
            <person name="Land M."/>
            <person name="Hauser L."/>
            <person name="Kyrpides N."/>
            <person name="Ovchinnikova G."/>
            <person name="Kataeva I."/>
            <person name="Adams M.W.W."/>
        </authorList>
    </citation>
    <scope>NUCLEOTIDE SEQUENCE [LARGE SCALE GENOMIC DNA]</scope>
    <source>
        <strain>ATCC BAA-1888 / DSM 6725 / KCTC 15123 / Z-1320</strain>
    </source>
</reference>
<comment type="function">
    <text evidence="1">One of the early assembly proteins it binds 23S rRNA. One of the proteins that surrounds the polypeptide exit tunnel on the outside of the ribosome. Forms the main docking site for trigger factor binding to the ribosome.</text>
</comment>
<comment type="subunit">
    <text evidence="1">Part of the 50S ribosomal subunit. Contacts protein L29, and trigger factor when it is bound to the ribosome.</text>
</comment>
<comment type="similarity">
    <text evidence="1">Belongs to the universal ribosomal protein uL23 family.</text>
</comment>